<proteinExistence type="evidence at protein level"/>
<protein>
    <recommendedName>
        <fullName>C-C motif chemokine 16</fullName>
    </recommendedName>
    <alternativeName>
        <fullName>Chemokine CC-4</fullName>
        <shortName>HCC-4</shortName>
    </alternativeName>
    <alternativeName>
        <fullName>Chemokine LEC</fullName>
    </alternativeName>
    <alternativeName>
        <fullName>IL-10-inducible chemokine</fullName>
    </alternativeName>
    <alternativeName>
        <fullName>LCC-1</fullName>
    </alternativeName>
    <alternativeName>
        <fullName>Liver-expressed chemokine</fullName>
    </alternativeName>
    <alternativeName>
        <fullName>Lymphocyte and monocyte chemoattractant</fullName>
        <shortName>LMC</shortName>
    </alternativeName>
    <alternativeName>
        <fullName>Monotactin-1</fullName>
        <shortName>MTN-1</shortName>
    </alternativeName>
    <alternativeName>
        <fullName>NCC-4</fullName>
    </alternativeName>
    <alternativeName>
        <fullName>Small-inducible cytokine A16</fullName>
    </alternativeName>
</protein>
<comment type="function">
    <text>Shows chemotactic activity for lymphocytes and monocytes but not neutrophils. Also shows potent myelosuppressive activity, suppresses proliferation of myeloid progenitor cells. Recombinant SCYA16 shows chemotactic activity for monocytes and THP-1 monocytes, but not for resting lymphocytes and neutrophils. Induces a calcium flux in THP-1 cells that were desensitized by prior expression to RANTES.</text>
</comment>
<comment type="interaction">
    <interactant intactId="EBI-12204739">
        <id>O15467</id>
    </interactant>
    <interactant intactId="EBI-2848366">
        <id>P13501</id>
        <label>CCL5</label>
    </interactant>
    <organismsDiffer>false</organismsDiffer>
    <experiments>2</experiments>
</comment>
<comment type="interaction">
    <interactant intactId="EBI-12204739">
        <id>O15467</id>
    </interactant>
    <interactant intactId="EBI-947187">
        <id>Q9UHD9</id>
        <label>UBQLN2</label>
    </interactant>
    <organismsDiffer>false</organismsDiffer>
    <experiments>3</experiments>
</comment>
<comment type="subcellular location">
    <subcellularLocation>
        <location>Secreted</location>
    </subcellularLocation>
</comment>
<comment type="tissue specificity">
    <text>Mainly expressed in liver, also found in spleen and thymus. Highly expressed in LPS- and IFN-gamma-activated monocytes, weakly in some lymphocytes, including natural killer cells, gamma-delta T-cells, and some T-cell clones.</text>
</comment>
<comment type="induction">
    <text>By IL10/interleukin-10.</text>
</comment>
<comment type="similarity">
    <text evidence="3">Belongs to the intercrine beta (chemokine CC) family.</text>
</comment>
<comment type="online information" name="Wikipedia">
    <link uri="https://en.wikipedia.org/wiki/CCL16"/>
    <text>CCL16 entry</text>
</comment>
<organism>
    <name type="scientific">Homo sapiens</name>
    <name type="common">Human</name>
    <dbReference type="NCBI Taxonomy" id="9606"/>
    <lineage>
        <taxon>Eukaryota</taxon>
        <taxon>Metazoa</taxon>
        <taxon>Chordata</taxon>
        <taxon>Craniata</taxon>
        <taxon>Vertebrata</taxon>
        <taxon>Euteleostomi</taxon>
        <taxon>Mammalia</taxon>
        <taxon>Eutheria</taxon>
        <taxon>Euarchontoglires</taxon>
        <taxon>Primates</taxon>
        <taxon>Haplorrhini</taxon>
        <taxon>Catarrhini</taxon>
        <taxon>Hominidae</taxon>
        <taxon>Homo</taxon>
    </lineage>
</organism>
<sequence>MKVSEAALSLLVLILIITSASRSQPKVPEWVNTPSTCCLKYYEKVLPRRLVVGYRKALNCHLPAIIFVTKRNREVCTNPNDDWVQEYIKDPNLPLLPTRNLSTVKIITAKNGQPQLLNSQ</sequence>
<name>CCL16_HUMAN</name>
<feature type="signal peptide" evidence="2">
    <location>
        <begin position="1"/>
        <end position="23"/>
    </location>
</feature>
<feature type="chain" id="PRO_0000005209" description="C-C motif chemokine 16">
    <location>
        <begin position="24"/>
        <end position="120"/>
    </location>
</feature>
<feature type="disulfide bond" evidence="1">
    <location>
        <begin position="37"/>
        <end position="60"/>
    </location>
</feature>
<feature type="disulfide bond" evidence="1">
    <location>
        <begin position="38"/>
        <end position="76"/>
    </location>
</feature>
<feature type="strand" evidence="4">
    <location>
        <begin position="35"/>
        <end position="37"/>
    </location>
</feature>
<feature type="helix" evidence="4">
    <location>
        <begin position="48"/>
        <end position="50"/>
    </location>
</feature>
<feature type="strand" evidence="4">
    <location>
        <begin position="51"/>
        <end position="57"/>
    </location>
</feature>
<feature type="strand" evidence="4">
    <location>
        <begin position="59"/>
        <end position="62"/>
    </location>
</feature>
<feature type="strand" evidence="4">
    <location>
        <begin position="64"/>
        <end position="69"/>
    </location>
</feature>
<feature type="strand" evidence="4">
    <location>
        <begin position="74"/>
        <end position="77"/>
    </location>
</feature>
<feature type="helix" evidence="4">
    <location>
        <begin position="82"/>
        <end position="89"/>
    </location>
</feature>
<reference key="1">
    <citation type="journal article" date="1998" name="Blood">
        <title>Characterization of a novel CC chemokine, HCC-4, whose expression is increased by interleukin-10.</title>
        <authorList>
            <person name="Hedrick J.A."/>
            <person name="Helms A."/>
            <person name="Vicari A."/>
            <person name="Zlotnik A."/>
        </authorList>
    </citation>
    <scope>NUCLEOTIDE SEQUENCE [MRNA]</scope>
    <scope>PROTEIN SEQUENCE OF N-TERMINUS</scope>
    <source>
        <tissue>Liver</tissue>
    </source>
</reference>
<reference key="2">
    <citation type="journal article" date="1998" name="Biochim. Biophys. Acta">
        <title>Isolation of cDNA encoding a novel human CC chemokine NCC-4/LEC.</title>
        <authorList>
            <person name="Shoudai K."/>
            <person name="Hieshima K."/>
            <person name="Fukuda S."/>
            <person name="Iio M."/>
            <person name="Miura R."/>
            <person name="Imai T."/>
            <person name="Yoshie O."/>
            <person name="Nomiyama H."/>
        </authorList>
    </citation>
    <scope>NUCLEOTIDE SEQUENCE [MRNA]</scope>
    <source>
        <tissue>Liver</tissue>
    </source>
</reference>
<reference key="3">
    <citation type="journal article" date="1999" name="J. Interferon Cytokine Res.">
        <title>Organization of the chemokine gene cluster on human chromosome 17q11.2 containing the genes for CC chemokine MPIF-1, HCC-2, LEC, and RANTES.</title>
        <authorList>
            <person name="Nomiyama H."/>
            <person name="Fukuda S."/>
            <person name="Iio M."/>
            <person name="Tanase S."/>
            <person name="Miura R."/>
            <person name="Yoshie O."/>
        </authorList>
    </citation>
    <scope>NUCLEOTIDE SEQUENCE [GENOMIC DNA]</scope>
</reference>
<reference key="4">
    <citation type="journal article" date="1998" name="Biochem. Biophys. Res. Commun.">
        <title>Isolation and characterization of LMC, a novel lymphocyte and monocyte chemoattractant human CC chemokine, with myelosuppressive activity.</title>
        <authorList>
            <person name="Youn B.-S."/>
            <person name="Zhang S."/>
            <person name="Broxmeyer H.E."/>
            <person name="Antol K."/>
            <person name="Fraser M.J. Jr."/>
            <person name="Hangoc G."/>
            <person name="Kwon B.S."/>
        </authorList>
    </citation>
    <scope>NUCLEOTIDE SEQUENCE [MRNA]</scope>
</reference>
<reference key="5">
    <citation type="journal article" date="1999" name="DNA Cell Biol.">
        <title>Genomic organization of the genes for human and mouse CC chemokine LEC.</title>
        <authorList>
            <person name="Fukuda S."/>
            <person name="Hanano Y."/>
            <person name="Iio M."/>
            <person name="Miura R."/>
            <person name="Yoshie O."/>
            <person name="Nomiyama H."/>
        </authorList>
    </citation>
    <scope>NUCLEOTIDE SEQUENCE [GENOMIC DNA]</scope>
    <source>
        <tissue>Liver</tissue>
    </source>
</reference>
<reference key="6">
    <citation type="journal article" date="2000" name="Cytokine">
        <title>Cloning, characterization and genomic organization of LCC-1 (scya16), a novel human CC chemokine expressed in liver.</title>
        <authorList>
            <person name="Yang J.-Y."/>
            <person name="Spanaus K.S."/>
            <person name="Widmer U."/>
        </authorList>
    </citation>
    <scope>NUCLEOTIDE SEQUENCE [GENOMIC DNA / MRNA]</scope>
    <source>
        <tissue>Liver</tissue>
    </source>
</reference>
<reference key="7">
    <citation type="journal article" date="2004" name="Genome Res.">
        <title>The status, quality, and expansion of the NIH full-length cDNA project: the Mammalian Gene Collection (MGC).</title>
        <authorList>
            <consortium name="The MGC Project Team"/>
        </authorList>
    </citation>
    <scope>NUCLEOTIDE SEQUENCE [LARGE SCALE MRNA]</scope>
</reference>
<evidence type="ECO:0000250" key="1"/>
<evidence type="ECO:0000269" key="2">
    <source>
    </source>
</evidence>
<evidence type="ECO:0000305" key="3"/>
<evidence type="ECO:0007829" key="4">
    <source>
        <dbReference type="PDB" id="5LTL"/>
    </source>
</evidence>
<dbReference type="EMBL" id="U91746">
    <property type="protein sequence ID" value="AAC05587.1"/>
    <property type="molecule type" value="mRNA"/>
</dbReference>
<dbReference type="EMBL" id="AB007454">
    <property type="protein sequence ID" value="BAA24057.1"/>
    <property type="molecule type" value="mRNA"/>
</dbReference>
<dbReference type="EMBL" id="AF088219">
    <property type="protein sequence ID" value="AAC63330.1"/>
    <property type="molecule type" value="Genomic_DNA"/>
</dbReference>
<dbReference type="EMBL" id="AF055467">
    <property type="protein sequence ID" value="AAC28844.1"/>
    <property type="molecule type" value="mRNA"/>
</dbReference>
<dbReference type="EMBL" id="AB018249">
    <property type="protein sequence ID" value="BAA35138.1"/>
    <property type="molecule type" value="Genomic_DNA"/>
</dbReference>
<dbReference type="EMBL" id="AF039954">
    <property type="protein sequence ID" value="AAC97450.1"/>
    <property type="molecule type" value="Genomic_DNA"/>
</dbReference>
<dbReference type="EMBL" id="AF039955">
    <property type="protein sequence ID" value="AAC97451.1"/>
    <property type="molecule type" value="mRNA"/>
</dbReference>
<dbReference type="EMBL" id="BC099662">
    <property type="protein sequence ID" value="AAH99662.1"/>
    <property type="molecule type" value="mRNA"/>
</dbReference>
<dbReference type="CCDS" id="CCDS11303.1"/>
<dbReference type="PIR" id="JE0177">
    <property type="entry name" value="JE0177"/>
</dbReference>
<dbReference type="RefSeq" id="NP_004581.1">
    <property type="nucleotide sequence ID" value="NM_004590.4"/>
</dbReference>
<dbReference type="RefSeq" id="XP_005258077.1">
    <property type="nucleotide sequence ID" value="XM_005258020.4"/>
</dbReference>
<dbReference type="RefSeq" id="XP_054172846.1">
    <property type="nucleotide sequence ID" value="XM_054316871.1"/>
</dbReference>
<dbReference type="RefSeq" id="XP_054172847.1">
    <property type="nucleotide sequence ID" value="XM_054316872.1"/>
</dbReference>
<dbReference type="RefSeq" id="XP_054185286.1">
    <property type="nucleotide sequence ID" value="XM_054329311.1"/>
</dbReference>
<dbReference type="RefSeq" id="XP_054185287.1">
    <property type="nucleotide sequence ID" value="XM_054329312.1"/>
</dbReference>
<dbReference type="PDB" id="5LTL">
    <property type="method" value="X-ray"/>
    <property type="resolution" value="1.45 A"/>
    <property type="chains" value="A/B=24-120"/>
</dbReference>
<dbReference type="PDB" id="7SCT">
    <property type="method" value="X-ray"/>
    <property type="resolution" value="1.84 A"/>
    <property type="chains" value="B=23-120"/>
</dbReference>
<dbReference type="PDB" id="8FK9">
    <property type="method" value="X-ray"/>
    <property type="resolution" value="2.70 A"/>
    <property type="chains" value="C/D=23-120"/>
</dbReference>
<dbReference type="PDBsum" id="5LTL"/>
<dbReference type="PDBsum" id="7SCT"/>
<dbReference type="PDBsum" id="8FK9"/>
<dbReference type="SMR" id="O15467"/>
<dbReference type="BioGRID" id="112263">
    <property type="interactions" value="8"/>
</dbReference>
<dbReference type="DIP" id="DIP-5831N"/>
<dbReference type="FunCoup" id="O15467">
    <property type="interactions" value="724"/>
</dbReference>
<dbReference type="IntAct" id="O15467">
    <property type="interactions" value="8"/>
</dbReference>
<dbReference type="STRING" id="9606.ENSP00000478024"/>
<dbReference type="BioMuta" id="CCL16"/>
<dbReference type="MassIVE" id="O15467"/>
<dbReference type="PaxDb" id="9606-ENSP00000478024"/>
<dbReference type="PeptideAtlas" id="O15467"/>
<dbReference type="ProteomicsDB" id="48683"/>
<dbReference type="TopDownProteomics" id="O15467"/>
<dbReference type="Antibodypedia" id="73562">
    <property type="antibodies" value="502 antibodies from 28 providers"/>
</dbReference>
<dbReference type="DNASU" id="6360"/>
<dbReference type="Ensembl" id="ENST00000611905.2">
    <property type="protein sequence ID" value="ENSP00000478024.1"/>
    <property type="gene ID" value="ENSG00000275152.5"/>
</dbReference>
<dbReference type="Ensembl" id="ENST00000621559.2">
    <property type="protein sequence ID" value="ENSP00000482168.1"/>
    <property type="gene ID" value="ENSG00000275095.2"/>
</dbReference>
<dbReference type="GeneID" id="6360"/>
<dbReference type="KEGG" id="hsa:6360"/>
<dbReference type="MANE-Select" id="ENST00000611905.2">
    <property type="protein sequence ID" value="ENSP00000478024.1"/>
    <property type="RefSeq nucleotide sequence ID" value="NM_004590.4"/>
    <property type="RefSeq protein sequence ID" value="NP_004581.1"/>
</dbReference>
<dbReference type="UCSC" id="uc002hkl.4">
    <property type="organism name" value="human"/>
</dbReference>
<dbReference type="AGR" id="HGNC:10614"/>
<dbReference type="CTD" id="6360"/>
<dbReference type="DisGeNET" id="6360"/>
<dbReference type="GeneCards" id="CCL16"/>
<dbReference type="HGNC" id="HGNC:10614">
    <property type="gene designation" value="CCL16"/>
</dbReference>
<dbReference type="HPA" id="ENSG00000275152">
    <property type="expression patterns" value="Tissue enriched (liver)"/>
</dbReference>
<dbReference type="MIM" id="601394">
    <property type="type" value="gene"/>
</dbReference>
<dbReference type="neXtProt" id="NX_O15467"/>
<dbReference type="OpenTargets" id="ENSG00000275152"/>
<dbReference type="PharmGKB" id="PA35547"/>
<dbReference type="VEuPathDB" id="HostDB:ENSG00000275152"/>
<dbReference type="eggNOG" id="ENOG502TDPW">
    <property type="taxonomic scope" value="Eukaryota"/>
</dbReference>
<dbReference type="GeneTree" id="ENSGT01100000263482"/>
<dbReference type="InParanoid" id="O15467"/>
<dbReference type="OMA" id="DNWVQEY"/>
<dbReference type="OrthoDB" id="9930747at2759"/>
<dbReference type="PAN-GO" id="O15467">
    <property type="GO annotations" value="14 GO annotations based on evolutionary models"/>
</dbReference>
<dbReference type="PhylomeDB" id="O15467"/>
<dbReference type="TreeFam" id="TF334888"/>
<dbReference type="PathwayCommons" id="O15467"/>
<dbReference type="Reactome" id="R-HSA-380108">
    <property type="pathway name" value="Chemokine receptors bind chemokines"/>
</dbReference>
<dbReference type="Reactome" id="R-HSA-418594">
    <property type="pathway name" value="G alpha (i) signalling events"/>
</dbReference>
<dbReference type="SignaLink" id="O15467"/>
<dbReference type="BioGRID-ORCS" id="6360">
    <property type="hits" value="13 hits in 1102 CRISPR screens"/>
</dbReference>
<dbReference type="GenomeRNAi" id="6360"/>
<dbReference type="Pharos" id="O15467">
    <property type="development level" value="Tbio"/>
</dbReference>
<dbReference type="PRO" id="PR:O15467"/>
<dbReference type="Proteomes" id="UP000005640">
    <property type="component" value="Chromosome 17"/>
</dbReference>
<dbReference type="RNAct" id="O15467">
    <property type="molecule type" value="protein"/>
</dbReference>
<dbReference type="Bgee" id="ENSG00000275152">
    <property type="expression patterns" value="Expressed in liver and 71 other cell types or tissues"/>
</dbReference>
<dbReference type="ExpressionAtlas" id="O15467">
    <property type="expression patterns" value="baseline and differential"/>
</dbReference>
<dbReference type="GO" id="GO:0005576">
    <property type="term" value="C:extracellular region"/>
    <property type="evidence" value="ECO:0000304"/>
    <property type="project" value="Reactome"/>
</dbReference>
<dbReference type="GO" id="GO:0005615">
    <property type="term" value="C:extracellular space"/>
    <property type="evidence" value="ECO:0000318"/>
    <property type="project" value="GO_Central"/>
</dbReference>
<dbReference type="GO" id="GO:0048020">
    <property type="term" value="F:CCR chemokine receptor binding"/>
    <property type="evidence" value="ECO:0000318"/>
    <property type="project" value="GO_Central"/>
</dbReference>
<dbReference type="GO" id="GO:0042056">
    <property type="term" value="F:chemoattractant activity"/>
    <property type="evidence" value="ECO:0000314"/>
    <property type="project" value="UniProtKB"/>
</dbReference>
<dbReference type="GO" id="GO:0008009">
    <property type="term" value="F:chemokine activity"/>
    <property type="evidence" value="ECO:0000318"/>
    <property type="project" value="GO_Central"/>
</dbReference>
<dbReference type="GO" id="GO:0061844">
    <property type="term" value="P:antimicrobial humoral immune response mediated by antimicrobial peptide"/>
    <property type="evidence" value="ECO:0000318"/>
    <property type="project" value="GO_Central"/>
</dbReference>
<dbReference type="GO" id="GO:0007154">
    <property type="term" value="P:cell communication"/>
    <property type="evidence" value="ECO:0000304"/>
    <property type="project" value="ProtInc"/>
</dbReference>
<dbReference type="GO" id="GO:0007267">
    <property type="term" value="P:cell-cell signaling"/>
    <property type="evidence" value="ECO:0000304"/>
    <property type="project" value="ProtInc"/>
</dbReference>
<dbReference type="GO" id="GO:0070098">
    <property type="term" value="P:chemokine-mediated signaling pathway"/>
    <property type="evidence" value="ECO:0000318"/>
    <property type="project" value="GO_Central"/>
</dbReference>
<dbReference type="GO" id="GO:0006935">
    <property type="term" value="P:chemotaxis"/>
    <property type="evidence" value="ECO:0000304"/>
    <property type="project" value="ProtInc"/>
</dbReference>
<dbReference type="GO" id="GO:0048245">
    <property type="term" value="P:eosinophil chemotaxis"/>
    <property type="evidence" value="ECO:0000318"/>
    <property type="project" value="GO_Central"/>
</dbReference>
<dbReference type="GO" id="GO:0006954">
    <property type="term" value="P:inflammatory response"/>
    <property type="evidence" value="ECO:0000318"/>
    <property type="project" value="GO_Central"/>
</dbReference>
<dbReference type="GO" id="GO:0030335">
    <property type="term" value="P:positive regulation of cell migration"/>
    <property type="evidence" value="ECO:0000318"/>
    <property type="project" value="GO_Central"/>
</dbReference>
<dbReference type="CDD" id="cd00272">
    <property type="entry name" value="Chemokine_CC"/>
    <property type="match status" value="1"/>
</dbReference>
<dbReference type="FunFam" id="2.40.50.40:FF:000034">
    <property type="entry name" value="C-C motif chemokine"/>
    <property type="match status" value="1"/>
</dbReference>
<dbReference type="Gene3D" id="2.40.50.40">
    <property type="match status" value="1"/>
</dbReference>
<dbReference type="InterPro" id="IPR039809">
    <property type="entry name" value="Chemokine_b/g/d"/>
</dbReference>
<dbReference type="InterPro" id="IPR000827">
    <property type="entry name" value="Chemokine_CC_CS"/>
</dbReference>
<dbReference type="InterPro" id="IPR001811">
    <property type="entry name" value="Chemokine_IL8-like_dom"/>
</dbReference>
<dbReference type="InterPro" id="IPR036048">
    <property type="entry name" value="Interleukin_8-like_sf"/>
</dbReference>
<dbReference type="PANTHER" id="PTHR12015:SF21">
    <property type="entry name" value="C-C MOTIF CHEMOKINE 16"/>
    <property type="match status" value="1"/>
</dbReference>
<dbReference type="PANTHER" id="PTHR12015">
    <property type="entry name" value="SMALL INDUCIBLE CYTOKINE A"/>
    <property type="match status" value="1"/>
</dbReference>
<dbReference type="Pfam" id="PF00048">
    <property type="entry name" value="IL8"/>
    <property type="match status" value="1"/>
</dbReference>
<dbReference type="SMART" id="SM00199">
    <property type="entry name" value="SCY"/>
    <property type="match status" value="1"/>
</dbReference>
<dbReference type="SUPFAM" id="SSF54117">
    <property type="entry name" value="Interleukin 8-like chemokines"/>
    <property type="match status" value="1"/>
</dbReference>
<dbReference type="PROSITE" id="PS00472">
    <property type="entry name" value="SMALL_CYTOKINES_CC"/>
    <property type="match status" value="1"/>
</dbReference>
<accession>O15467</accession>
<accession>Q4KKU0</accession>
<keyword id="KW-0002">3D-structure</keyword>
<keyword id="KW-0145">Chemotaxis</keyword>
<keyword id="KW-0202">Cytokine</keyword>
<keyword id="KW-0903">Direct protein sequencing</keyword>
<keyword id="KW-1015">Disulfide bond</keyword>
<keyword id="KW-0395">Inflammatory response</keyword>
<keyword id="KW-1267">Proteomics identification</keyword>
<keyword id="KW-1185">Reference proteome</keyword>
<keyword id="KW-0964">Secreted</keyword>
<keyword id="KW-0732">Signal</keyword>
<gene>
    <name type="primary">CCL16</name>
    <name type="synonym">ILINCK</name>
    <name type="synonym">NCC4</name>
    <name type="synonym">SCYA16</name>
</gene>